<protein>
    <recommendedName>
        <fullName evidence="1">Inner membrane-spanning protein YciB</fullName>
    </recommendedName>
</protein>
<reference key="1">
    <citation type="journal article" date="2008" name="J. Bacteriol.">
        <title>Insights into the environmental resistance gene pool from the genome sequence of the multidrug-resistant environmental isolate Escherichia coli SMS-3-5.</title>
        <authorList>
            <person name="Fricke W.F."/>
            <person name="Wright M.S."/>
            <person name="Lindell A.H."/>
            <person name="Harkins D.M."/>
            <person name="Baker-Austin C."/>
            <person name="Ravel J."/>
            <person name="Stepanauskas R."/>
        </authorList>
    </citation>
    <scope>NUCLEOTIDE SEQUENCE [LARGE SCALE GENOMIC DNA]</scope>
    <source>
        <strain>SMS-3-5 / SECEC</strain>
    </source>
</reference>
<name>YCIB_ECOSM</name>
<dbReference type="EMBL" id="CP000970">
    <property type="protein sequence ID" value="ACB16103.1"/>
    <property type="molecule type" value="Genomic_DNA"/>
</dbReference>
<dbReference type="RefSeq" id="WP_000808672.1">
    <property type="nucleotide sequence ID" value="NC_010498.1"/>
</dbReference>
<dbReference type="KEGG" id="ecm:EcSMS35_1878"/>
<dbReference type="HOGENOM" id="CLU_089554_2_0_6"/>
<dbReference type="Proteomes" id="UP000007011">
    <property type="component" value="Chromosome"/>
</dbReference>
<dbReference type="GO" id="GO:0005886">
    <property type="term" value="C:plasma membrane"/>
    <property type="evidence" value="ECO:0007669"/>
    <property type="project" value="UniProtKB-SubCell"/>
</dbReference>
<dbReference type="HAMAP" id="MF_00189">
    <property type="entry name" value="YciB"/>
    <property type="match status" value="1"/>
</dbReference>
<dbReference type="InterPro" id="IPR006008">
    <property type="entry name" value="YciB"/>
</dbReference>
<dbReference type="NCBIfam" id="TIGR00997">
    <property type="entry name" value="ispZ"/>
    <property type="match status" value="1"/>
</dbReference>
<dbReference type="NCBIfam" id="NF001324">
    <property type="entry name" value="PRK00259.1-2"/>
    <property type="match status" value="1"/>
</dbReference>
<dbReference type="NCBIfam" id="NF001325">
    <property type="entry name" value="PRK00259.1-3"/>
    <property type="match status" value="1"/>
</dbReference>
<dbReference type="NCBIfam" id="NF001326">
    <property type="entry name" value="PRK00259.1-4"/>
    <property type="match status" value="1"/>
</dbReference>
<dbReference type="PANTHER" id="PTHR36917:SF1">
    <property type="entry name" value="INNER MEMBRANE-SPANNING PROTEIN YCIB"/>
    <property type="match status" value="1"/>
</dbReference>
<dbReference type="PANTHER" id="PTHR36917">
    <property type="entry name" value="INTRACELLULAR SEPTATION PROTEIN A-RELATED"/>
    <property type="match status" value="1"/>
</dbReference>
<dbReference type="Pfam" id="PF04279">
    <property type="entry name" value="IspA"/>
    <property type="match status" value="1"/>
</dbReference>
<proteinExistence type="inferred from homology"/>
<feature type="chain" id="PRO_1000118582" description="Inner membrane-spanning protein YciB">
    <location>
        <begin position="1"/>
        <end position="179"/>
    </location>
</feature>
<feature type="transmembrane region" description="Helical" evidence="1">
    <location>
        <begin position="22"/>
        <end position="42"/>
    </location>
</feature>
<feature type="transmembrane region" description="Helical" evidence="1">
    <location>
        <begin position="50"/>
        <end position="70"/>
    </location>
</feature>
<feature type="transmembrane region" description="Helical" evidence="1">
    <location>
        <begin position="76"/>
        <end position="96"/>
    </location>
</feature>
<feature type="transmembrane region" description="Helical" evidence="1">
    <location>
        <begin position="121"/>
        <end position="141"/>
    </location>
</feature>
<feature type="transmembrane region" description="Helical" evidence="1">
    <location>
        <begin position="149"/>
        <end position="169"/>
    </location>
</feature>
<accession>B1LH38</accession>
<comment type="function">
    <text evidence="1">Plays a role in cell envelope biogenesis, maintenance of cell envelope integrity and membrane homeostasis.</text>
</comment>
<comment type="subcellular location">
    <subcellularLocation>
        <location evidence="1">Cell inner membrane</location>
        <topology evidence="1">Multi-pass membrane protein</topology>
    </subcellularLocation>
</comment>
<comment type="similarity">
    <text evidence="1">Belongs to the YciB family.</text>
</comment>
<gene>
    <name evidence="1" type="primary">yciB</name>
    <name type="ordered locus">EcSMS35_1878</name>
</gene>
<keyword id="KW-0997">Cell inner membrane</keyword>
<keyword id="KW-1003">Cell membrane</keyword>
<keyword id="KW-0472">Membrane</keyword>
<keyword id="KW-0812">Transmembrane</keyword>
<keyword id="KW-1133">Transmembrane helix</keyword>
<organism>
    <name type="scientific">Escherichia coli (strain SMS-3-5 / SECEC)</name>
    <dbReference type="NCBI Taxonomy" id="439855"/>
    <lineage>
        <taxon>Bacteria</taxon>
        <taxon>Pseudomonadati</taxon>
        <taxon>Pseudomonadota</taxon>
        <taxon>Gammaproteobacteria</taxon>
        <taxon>Enterobacterales</taxon>
        <taxon>Enterobacteriaceae</taxon>
        <taxon>Escherichia</taxon>
    </lineage>
</organism>
<evidence type="ECO:0000255" key="1">
    <source>
        <dbReference type="HAMAP-Rule" id="MF_00189"/>
    </source>
</evidence>
<sequence>MKQFLDFLPLVVFFAFYKIYDIYAATAALIVATAIVLIYSWVRFRKVEKMALITFVLVVVFGGLTLFFHNDEFIKWKVTVIYALFAGALLVSQWVMKKPLIQRMLGKELTLPQSVWSKLNLAWAVFFILCGLANIYIAFWLPQNIWVNFKVFGLTALTLIFTLLSGIYIYRHMPQEDKS</sequence>